<feature type="chain" id="PRO_0000079140" description="Nucleoprotein">
    <location>
        <begin position="1"/>
        <end position="560"/>
    </location>
</feature>
<feature type="region of interest" description="Disordered" evidence="2">
    <location>
        <begin position="1"/>
        <end position="74"/>
    </location>
</feature>
<feature type="compositionally biased region" description="Polar residues" evidence="2">
    <location>
        <begin position="10"/>
        <end position="28"/>
    </location>
</feature>
<proteinExistence type="evidence at protein level"/>
<organismHost>
    <name type="scientific">Homo sapiens</name>
    <name type="common">Human</name>
    <dbReference type="NCBI Taxonomy" id="9606"/>
</organismHost>
<sequence length="560" mass="61594">MSNMDIDGINTGTIDKTPEEITSGTSGATRPIIKPATLAPPSNKRTRNPSPERAATSSEADVGRRTQKKQTPTEIKKSVYNMVVKLGEFYNQMMVKAGLNDDMERNLIQNAHAAERILLAATDDKKTEFQKKKNARDVKEGKEEIDHNKTGGTFYKMVRDDKTIYFSPIRITFLKEEVKTMYKTTMGSDGFSGLNHIMIGHSQMNDVCFQRSKALKRVGLDPSLISTFAGSTLPRRSGATGVAIKGGGTLVAEAIRFIGRAMADRGLLRDIRAKTAYEKILLNLKNKCSAPQQKALVDQVIGSRNPGIADIEDLTLLARSMVVVRPSVASKVVLPISINAKIPQLGFNVEEYSMVGYEAMALYNMATPVSILRMGDDAKDKSQLFFMSCFGAAYEDQRVLSALTGTEFKHRSALKCKGFHVPAKEQVEGMGAALMSIKLQFWAPMTRSGGNEVGGDGGSGQISCSPVFAVERPIALSKQAVRRMLSMNIEGRDADVKGNLLKMMNDSMTKKTNGNAFIGKKMFQISDKNKTNPIEIPIKQTIPNFFFGRDTAEDYDDLDY</sequence>
<accession>P13884</accession>
<gene>
    <name evidence="1" type="primary">NP</name>
</gene>
<keyword id="KW-0002">3D-structure</keyword>
<keyword id="KW-0167">Capsid protein</keyword>
<keyword id="KW-1139">Helical capsid protein</keyword>
<keyword id="KW-1048">Host nucleus</keyword>
<keyword id="KW-0945">Host-virus interaction</keyword>
<keyword id="KW-0687">Ribonucleoprotein</keyword>
<keyword id="KW-0694">RNA-binding</keyword>
<keyword id="KW-0543">Viral nucleoprotein</keyword>
<keyword id="KW-1163">Viral penetration into host nucleus</keyword>
<keyword id="KW-0946">Virion</keyword>
<keyword id="KW-1160">Virus entry into host cell</keyword>
<comment type="function">
    <text evidence="1">Encapsidates the negative strand viral RNA, protecting it from nucleases. The encapsidated genomic RNA is termed the ribonucleoprotein (RNP) and serves as template for transcription and replication. The RNP needs to be localized in the host nucleus to start an infectious cycle, but is too large to diffuse through the nuclear pore complex. NP comprises at least 2 nuclear localization signals that are responsible for the active RNP import into the nucleus through cellular importin alpha/beta pathway. Later in the infection, nclear export of RNPs are mediated through viral proteins NEP interacting with M1 which binds nucleoproteins. It is possible that nucleoprotein binds directly host exportin-1/XPO1 and plays an active role in RNPs nuclear export. M1 interaction with RNP seems to hide nucleoprotein's nuclear localization signals. Soon after a virion infects a new cell, M1 dissociates from the RNP under acidification of the virion driven by M2 protein. Dissociation of M1 from RNP unmasks nucleoprotein's nuclear localization signals, targeting the RNP to the nucleus.</text>
</comment>
<comment type="subunit">
    <text evidence="1">Homomultimerizes to form the nucleocapsid. May bind host exportin-1/XPO1. Binds to viral genomic RNA. Protein-RNA contacts are mediated by a combination of electrostatic interactions between positively charged residues and the phosphate backbone and planar interactions between aromatic side chains and bases.</text>
</comment>
<comment type="subcellular location">
    <subcellularLocation>
        <location evidence="1">Virion</location>
    </subcellularLocation>
    <subcellularLocation>
        <location evidence="1">Host nucleus</location>
    </subcellularLocation>
</comment>
<comment type="PTM">
    <text evidence="1">Late in virus-infected cells, may be cleaved from a 56-kDa protein to a 53-kDa protein by a cellular caspase. This cleavage might be a marker for the onset of apoptosis in infected cells or have a specific function in virus host interaction.</text>
</comment>
<comment type="similarity">
    <text evidence="1">Belongs to the influenza viruses nucleoprotein family.</text>
</comment>
<organism>
    <name type="scientific">Influenza B virus (strain B/Ann Arbor/1/1966 [cold-adapted])</name>
    <dbReference type="NCBI Taxonomy" id="11522"/>
    <lineage>
        <taxon>Viruses</taxon>
        <taxon>Riboviria</taxon>
        <taxon>Orthornavirae</taxon>
        <taxon>Negarnaviricota</taxon>
        <taxon>Polyploviricotina</taxon>
        <taxon>Insthoviricetes</taxon>
        <taxon>Articulavirales</taxon>
        <taxon>Orthomyxoviridae</taxon>
        <taxon>Betainfluenzavirus</taxon>
        <taxon>Betainfluenzavirus influenzae</taxon>
        <taxon>Influenza B virus</taxon>
    </lineage>
</organism>
<protein>
    <recommendedName>
        <fullName evidence="1">Nucleoprotein</fullName>
    </recommendedName>
    <alternativeName>
        <fullName evidence="1">Nucleocapsid protein</fullName>
        <shortName evidence="1">Protein N</shortName>
    </alternativeName>
</protein>
<name>NCAP_INBAC</name>
<dbReference type="EMBL" id="M20173">
    <property type="protein sequence ID" value="AAA66418.1"/>
    <property type="molecule type" value="Genomic_RNA"/>
</dbReference>
<dbReference type="PIR" id="G28604">
    <property type="entry name" value="VHIVBC"/>
</dbReference>
<dbReference type="PDB" id="7MLE">
    <property type="method" value="X-ray"/>
    <property type="resolution" value="2.20 A"/>
    <property type="chains" value="C=323-331"/>
</dbReference>
<dbReference type="PDBsum" id="7MLE"/>
<dbReference type="SMR" id="P13884"/>
<dbReference type="GO" id="GO:0019029">
    <property type="term" value="C:helical viral capsid"/>
    <property type="evidence" value="ECO:0007669"/>
    <property type="project" value="UniProtKB-UniRule"/>
</dbReference>
<dbReference type="GO" id="GO:0043657">
    <property type="term" value="C:host cell"/>
    <property type="evidence" value="ECO:0007669"/>
    <property type="project" value="GOC"/>
</dbReference>
<dbReference type="GO" id="GO:0042025">
    <property type="term" value="C:host cell nucleus"/>
    <property type="evidence" value="ECO:0007669"/>
    <property type="project" value="UniProtKB-SubCell"/>
</dbReference>
<dbReference type="GO" id="GO:1990904">
    <property type="term" value="C:ribonucleoprotein complex"/>
    <property type="evidence" value="ECO:0007669"/>
    <property type="project" value="UniProtKB-KW"/>
</dbReference>
<dbReference type="GO" id="GO:0019013">
    <property type="term" value="C:viral nucleocapsid"/>
    <property type="evidence" value="ECO:0007669"/>
    <property type="project" value="UniProtKB-UniRule"/>
</dbReference>
<dbReference type="GO" id="GO:0003723">
    <property type="term" value="F:RNA binding"/>
    <property type="evidence" value="ECO:0007669"/>
    <property type="project" value="UniProtKB-UniRule"/>
</dbReference>
<dbReference type="GO" id="GO:0005198">
    <property type="term" value="F:structural molecule activity"/>
    <property type="evidence" value="ECO:0007669"/>
    <property type="project" value="UniProtKB-UniRule"/>
</dbReference>
<dbReference type="GO" id="GO:0046718">
    <property type="term" value="P:symbiont entry into host cell"/>
    <property type="evidence" value="ECO:0007669"/>
    <property type="project" value="UniProtKB-KW"/>
</dbReference>
<dbReference type="GO" id="GO:0075732">
    <property type="term" value="P:viral penetration into host nucleus"/>
    <property type="evidence" value="ECO:0007669"/>
    <property type="project" value="UniProtKB-UniRule"/>
</dbReference>
<dbReference type="HAMAP" id="MF_04070">
    <property type="entry name" value="INFV_NCAP"/>
    <property type="match status" value="1"/>
</dbReference>
<dbReference type="InterPro" id="IPR002141">
    <property type="entry name" value="Flu_NP"/>
</dbReference>
<dbReference type="Pfam" id="PF00506">
    <property type="entry name" value="Flu_NP"/>
    <property type="match status" value="1"/>
</dbReference>
<dbReference type="SUPFAM" id="SSF161003">
    <property type="entry name" value="flu NP-like"/>
    <property type="match status" value="1"/>
</dbReference>
<evidence type="ECO:0000255" key="1">
    <source>
        <dbReference type="HAMAP-Rule" id="MF_04070"/>
    </source>
</evidence>
<evidence type="ECO:0000256" key="2">
    <source>
        <dbReference type="SAM" id="MobiDB-lite"/>
    </source>
</evidence>
<reference key="1">
    <citation type="journal article" date="1988" name="Virology">
        <title>Sequence comparison of wild-type and cold-adapted B/Ann Arbor/1/66 influenza virus genes.</title>
        <authorList>
            <person name="Deborde D.C."/>
            <person name="Donabedian A.M."/>
            <person name="Herlocher M.L."/>
            <person name="Naeve C.W."/>
            <person name="Maassab H.F."/>
        </authorList>
    </citation>
    <scope>NUCLEOTIDE SEQUENCE [GENOMIC RNA]</scope>
</reference>